<comment type="function">
    <text>Fibrinogen has a double function: yielding monomers that polymerize into fibrin and acting as a cofactor in platelet aggregation.</text>
</comment>
<comment type="subunit">
    <text evidence="3 4">Heterohexamer; disulfide linked. Contains 2 sets of 3 non-identical chains (alpha, beta and gamma). The 2 heterotrimers are in head to head conformation with the N-termini in a small central domain.</text>
</comment>
<comment type="subcellular location">
    <subcellularLocation>
        <location evidence="4">Secreted</location>
    </subcellularLocation>
</comment>
<comment type="domain">
    <text evidence="3 4">A long coiled coil structure formed by 3 polypeptide chains connects the central nodule to the C-terminal domains (distal nodules). The long C-terminal ends of the alpha chains fold back, contributing a fourth strand to the coiled coil structure.</text>
</comment>
<comment type="PTM">
    <text>Not glycosylated.</text>
</comment>
<comment type="PTM">
    <text>Conversion of fibrinogen to fibrin is triggered by thrombin, which cleaves fibrinopeptides A and B from alpha and beta chains, and thus exposes the N-terminal polymerization sites responsible for the formation of the soft clot. The soft clot is converted into the hard clot by factor XIIIA which catalyzes the epsilon-(gamma-glutamyl)lysine cross-linking between gamma chains (stronger) and between alpha chains (weaker) of different monomers.</text>
</comment>
<comment type="PTM">
    <text>Forms F13A-mediated cross-links between a glutamine and the epsilon-amino group of a lysine residue, forming fibronectin-fibrinogen heteropolymers.</text>
</comment>
<proteinExistence type="evidence at protein level"/>
<sequence>QVCIADDISLRGPRLTEQRSAGQGSCASATADLCVHGDWGRKCPNGCRMQGLMSHAEKDIGKRIGDLTERLARLGRLYTQVHTDFRAVSDTSGQTLNEHNELEVRYSEVLRELERRIIHLQRRINMQLQQLTLLQHNIKTQVSQILRVEVDIDVALRTCKGSCARYLEYRLDKEKNLQLEKAASYIANLKFERFEEVVVEETLNRRVETSSHAFQPTHGQGTPQPGHGTHSLSATSSITSAPNFVPHRQPTYVDHGRLSNPNEVAHSASSSSTHTSSSSSPSQPVSRDSAFPLPGSNTGTSEWDFNFHDESTPGNGPRDEAAASSSAHSPSTASHDTATSTTSFSSGTSGKDVAPLGTGVTHDGGVRTSGSLMDGGSSDTGTGGVSKTTTFTGSAQGGSWSTGGSTATNTGSAQGGSWSTGGRTEPNTGSGQGGSWGTGGRTEPNTGSGQGGSWGTGGRTEPNTGSGQGGSWGTGGRTEPNTGSAQGGSWGTGGRTEPNTGSAQGGSWGTGGRTEPNTGSAQGGSWSTGGRTEPNTGSAKGGSWGTGGRTEPNTGSAKGGSWSTGGRTEPNTGSAKGGSWGTGGRTEPNTGSAQGGSWGTGGRTEPNTGSAQGGSWGTGGRTEPNTGSAQGGSWGTGGRTEPNTGSAQGGSWGTGGRTEPNTGSAQGGSWSTGGRTEPNTGSGQGGSWGTGGRTEPNTGSGQGGSWSTGGRTEPNTGSGQGGSWGTGGRTEPNTGSAQGGSWGTGGRTEPNTGSAQGGSWGTGGSTATNTGSAQGGGGYAAGGTGAQTGSGSTSTHSAHSASGGMSSLDMLPALPDFGTWDMPDHSDIFSRRRVSTSSTTSSSSGGGHAGAAAGGGGDGASRFGSLFTTDFGPEFHEEFRSMLPGASRLSSSSSSSTRSTSSTSGGKVVTESVVTKVLSNGTTITHHTKHVSTSDGTGAASDGVSPLLTGRKTKAARSRRAKATRP</sequence>
<reference key="1">
    <citation type="journal article" date="1989" name="Biochemistry">
        <title>Complete sequence of the lamprey fibrinogen alpha chain.</title>
        <authorList>
            <person name="Wang Y.Z."/>
            <person name="Patterson J."/>
            <person name="Gray J.E."/>
            <person name="Yu C."/>
            <person name="Cottrell B.A."/>
            <person name="Shimizu A."/>
            <person name="Graham D."/>
            <person name="Riley M."/>
            <person name="Doolittle R.F."/>
        </authorList>
    </citation>
    <scope>NUCLEOTIDE SEQUENCE [MRNA]</scope>
    <scope>PARTIAL PROTEIN SEQUENCE</scope>
</reference>
<reference key="2">
    <citation type="journal article" date="1976" name="Biochim. Biophys. Acta">
        <title>Amino acid sequences of lamprey fibrinopeptides A and B and characterizations of the junctions split by lamprey and mammalian thrombins.</title>
        <authorList>
            <person name="Cottrell B.A."/>
            <person name="Doolittle R.F."/>
        </authorList>
    </citation>
    <scope>PROTEIN SEQUENCE OF 6-11</scope>
</reference>
<reference key="3">
    <citation type="journal article" date="2002" name="Biochemistry">
        <title>Crystal structure of fragment D from lamprey fibrinogen complexed with the peptide Gly-His-Arg-Pro-amide.</title>
        <authorList>
            <person name="Yang Z."/>
            <person name="Spraggon G."/>
            <person name="Pandi L."/>
            <person name="Everse S.J."/>
            <person name="Riley M."/>
            <person name="Doolittle R.F."/>
        </authorList>
    </citation>
    <scope>X-RAY CRYSTALLOGRAPHY (2.8 ANGSTROMS) OF 87-205</scope>
    <scope>SUBUNIT</scope>
    <scope>COILED COIL DOMAIN</scope>
    <scope>DISULFIDE BONDS</scope>
</reference>
<reference key="4">
    <citation type="journal article" date="2002" name="Biochemistry">
        <title>The crystal structure of fragment double-D from cross-linked lamprey fibrin reveals isopeptide linkages across an unexpected D-D interface.</title>
        <authorList>
            <person name="Yang Z."/>
            <person name="Pandi L."/>
            <person name="Doolittle R.F."/>
        </authorList>
    </citation>
    <scope>X-RAY CRYSTALLOGRAPHY (2.9 ANGSTROMS) OF 87-205</scope>
    <scope>SUBUNIT</scope>
    <scope>SUBCELLULAR LOCATION</scope>
    <scope>COILED COIL DOMAIN</scope>
</reference>
<dbReference type="EMBL" id="M30123">
    <property type="protein sequence ID" value="AAA49263.1"/>
    <property type="molecule type" value="mRNA"/>
</dbReference>
<dbReference type="PIR" id="A33626">
    <property type="entry name" value="A33626"/>
</dbReference>
<dbReference type="PDB" id="1LWU">
    <property type="method" value="X-ray"/>
    <property type="resolution" value="2.80 A"/>
    <property type="chains" value="A/D/G/J=87-205"/>
</dbReference>
<dbReference type="PDB" id="1N73">
    <property type="method" value="X-ray"/>
    <property type="resolution" value="2.90 A"/>
    <property type="chains" value="A/D=87-205"/>
</dbReference>
<dbReference type="PDBsum" id="1LWU"/>
<dbReference type="PDBsum" id="1N73"/>
<dbReference type="SMR" id="P02674"/>
<dbReference type="STRING" id="7757.ENSPMAP00000008504"/>
<dbReference type="EvolutionaryTrace" id="P02674"/>
<dbReference type="Proteomes" id="UP001318040">
    <property type="component" value="Unplaced"/>
</dbReference>
<dbReference type="GO" id="GO:0005577">
    <property type="term" value="C:fibrinogen complex"/>
    <property type="evidence" value="ECO:0007669"/>
    <property type="project" value="InterPro"/>
</dbReference>
<dbReference type="GO" id="GO:0005201">
    <property type="term" value="F:extracellular matrix structural constituent"/>
    <property type="evidence" value="ECO:0007669"/>
    <property type="project" value="TreeGrafter"/>
</dbReference>
<dbReference type="GO" id="GO:0030674">
    <property type="term" value="F:protein-macromolecule adaptor activity"/>
    <property type="evidence" value="ECO:0007669"/>
    <property type="project" value="TreeGrafter"/>
</dbReference>
<dbReference type="GO" id="GO:0005102">
    <property type="term" value="F:signaling receptor binding"/>
    <property type="evidence" value="ECO:0007669"/>
    <property type="project" value="InterPro"/>
</dbReference>
<dbReference type="GO" id="GO:0072377">
    <property type="term" value="P:blood coagulation, common pathway"/>
    <property type="evidence" value="ECO:0007669"/>
    <property type="project" value="TreeGrafter"/>
</dbReference>
<dbReference type="GO" id="GO:0042730">
    <property type="term" value="P:fibrinolysis"/>
    <property type="evidence" value="ECO:0007669"/>
    <property type="project" value="TreeGrafter"/>
</dbReference>
<dbReference type="GO" id="GO:0070527">
    <property type="term" value="P:platelet aggregation"/>
    <property type="evidence" value="ECO:0007669"/>
    <property type="project" value="TreeGrafter"/>
</dbReference>
<dbReference type="GO" id="GO:0034116">
    <property type="term" value="P:positive regulation of heterotypic cell-cell adhesion"/>
    <property type="evidence" value="ECO:0007669"/>
    <property type="project" value="TreeGrafter"/>
</dbReference>
<dbReference type="GO" id="GO:0051258">
    <property type="term" value="P:protein polymerization"/>
    <property type="evidence" value="ECO:0007669"/>
    <property type="project" value="InterPro"/>
</dbReference>
<dbReference type="Gene3D" id="1.20.5.50">
    <property type="match status" value="2"/>
</dbReference>
<dbReference type="InterPro" id="IPR037579">
    <property type="entry name" value="FIB_ANG-like"/>
</dbReference>
<dbReference type="InterPro" id="IPR012290">
    <property type="entry name" value="Fibrinogen_a/b/g_coil_dom"/>
</dbReference>
<dbReference type="PANTHER" id="PTHR47221">
    <property type="entry name" value="FIBRINOGEN ALPHA CHAIN"/>
    <property type="match status" value="1"/>
</dbReference>
<dbReference type="PANTHER" id="PTHR47221:SF6">
    <property type="entry name" value="FIBRINOGEN ALPHA CHAIN"/>
    <property type="match status" value="1"/>
</dbReference>
<dbReference type="Pfam" id="PF08702">
    <property type="entry name" value="Fib_alpha"/>
    <property type="match status" value="1"/>
</dbReference>
<dbReference type="SMART" id="SM01212">
    <property type="entry name" value="Fib_alpha"/>
    <property type="match status" value="1"/>
</dbReference>
<dbReference type="SUPFAM" id="SSF58010">
    <property type="entry name" value="Fibrinogen coiled-coil and central regions"/>
    <property type="match status" value="1"/>
</dbReference>
<organism>
    <name type="scientific">Petromyzon marinus</name>
    <name type="common">Sea lamprey</name>
    <dbReference type="NCBI Taxonomy" id="7757"/>
    <lineage>
        <taxon>Eukaryota</taxon>
        <taxon>Metazoa</taxon>
        <taxon>Chordata</taxon>
        <taxon>Craniata</taxon>
        <taxon>Vertebrata</taxon>
        <taxon>Cyclostomata</taxon>
        <taxon>Hyperoartia</taxon>
        <taxon>Petromyzontiformes</taxon>
        <taxon>Petromyzontidae</taxon>
        <taxon>Petromyzon</taxon>
    </lineage>
</organism>
<feature type="signal peptide" evidence="5">
    <location>
        <begin position="1" status="less than"/>
        <end position="5"/>
    </location>
</feature>
<feature type="peptide" id="PRO_0000009049" description="Fibrinopeptide A" evidence="1">
    <location>
        <begin position="6"/>
        <end position="11"/>
    </location>
</feature>
<feature type="chain" id="PRO_0000009050" description="Fibrinogen alpha-1 chain">
    <location>
        <begin position="12"/>
        <end position="966"/>
    </location>
</feature>
<feature type="repeat" description="1">
    <location>
        <begin position="391"/>
        <end position="408"/>
    </location>
</feature>
<feature type="repeat" description="2">
    <location>
        <begin position="409"/>
        <end position="426"/>
    </location>
</feature>
<feature type="repeat" description="3">
    <location>
        <begin position="427"/>
        <end position="444"/>
    </location>
</feature>
<feature type="repeat" description="4">
    <location>
        <begin position="445"/>
        <end position="462"/>
    </location>
</feature>
<feature type="repeat" description="5">
    <location>
        <begin position="463"/>
        <end position="480"/>
    </location>
</feature>
<feature type="repeat" description="6">
    <location>
        <begin position="481"/>
        <end position="498"/>
    </location>
</feature>
<feature type="repeat" description="7">
    <location>
        <begin position="499"/>
        <end position="516"/>
    </location>
</feature>
<feature type="repeat" description="8">
    <location>
        <begin position="517"/>
        <end position="534"/>
    </location>
</feature>
<feature type="repeat" description="9">
    <location>
        <begin position="535"/>
        <end position="552"/>
    </location>
</feature>
<feature type="repeat" description="10">
    <location>
        <begin position="553"/>
        <end position="570"/>
    </location>
</feature>
<feature type="repeat" description="11">
    <location>
        <begin position="571"/>
        <end position="588"/>
    </location>
</feature>
<feature type="repeat" description="12">
    <location>
        <begin position="589"/>
        <end position="606"/>
    </location>
</feature>
<feature type="repeat" description="13">
    <location>
        <begin position="607"/>
        <end position="624"/>
    </location>
</feature>
<feature type="repeat" description="14">
    <location>
        <begin position="625"/>
        <end position="642"/>
    </location>
</feature>
<feature type="repeat" description="15">
    <location>
        <begin position="643"/>
        <end position="660"/>
    </location>
</feature>
<feature type="repeat" description="16">
    <location>
        <begin position="661"/>
        <end position="678"/>
    </location>
</feature>
<feature type="repeat" description="17">
    <location>
        <begin position="679"/>
        <end position="696"/>
    </location>
</feature>
<feature type="repeat" description="18">
    <location>
        <begin position="697"/>
        <end position="714"/>
    </location>
</feature>
<feature type="repeat" description="19">
    <location>
        <begin position="715"/>
        <end position="732"/>
    </location>
</feature>
<feature type="repeat" description="20">
    <location>
        <begin position="733"/>
        <end position="750"/>
    </location>
</feature>
<feature type="repeat" description="21">
    <location>
        <begin position="751"/>
        <end position="768"/>
    </location>
</feature>
<feature type="repeat" description="22; approximate">
    <location>
        <begin position="769"/>
        <end position="786"/>
    </location>
</feature>
<feature type="region of interest" description="Disordered" evidence="2">
    <location>
        <begin position="208"/>
        <end position="804"/>
    </location>
</feature>
<feature type="region of interest" description="22 X 18 AA approximate tandem repeats of [FN]-T-G-S-[AG]-[QK]-G-G-S-W-[SG]-T-G-G-[RS]-T-[AE]-[TP]">
    <location>
        <begin position="391"/>
        <end position="786"/>
    </location>
</feature>
<feature type="region of interest" description="Disordered" evidence="2">
    <location>
        <begin position="831"/>
        <end position="857"/>
    </location>
</feature>
<feature type="region of interest" description="Disordered" evidence="2">
    <location>
        <begin position="885"/>
        <end position="966"/>
    </location>
</feature>
<feature type="coiled-coil region" evidence="3">
    <location>
        <begin position="87"/>
        <end position="205"/>
    </location>
</feature>
<feature type="compositionally biased region" description="Polar residues" evidence="2">
    <location>
        <begin position="210"/>
        <end position="223"/>
    </location>
</feature>
<feature type="compositionally biased region" description="Polar residues" evidence="2">
    <location>
        <begin position="230"/>
        <end position="242"/>
    </location>
</feature>
<feature type="compositionally biased region" description="Low complexity" evidence="2">
    <location>
        <begin position="264"/>
        <end position="286"/>
    </location>
</feature>
<feature type="compositionally biased region" description="Basic and acidic residues" evidence="2">
    <location>
        <begin position="305"/>
        <end position="321"/>
    </location>
</feature>
<feature type="compositionally biased region" description="Low complexity" evidence="2">
    <location>
        <begin position="322"/>
        <end position="349"/>
    </location>
</feature>
<feature type="compositionally biased region" description="Low complexity" evidence="2">
    <location>
        <begin position="368"/>
        <end position="417"/>
    </location>
</feature>
<feature type="compositionally biased region" description="Gly residues" evidence="2">
    <location>
        <begin position="430"/>
        <end position="440"/>
    </location>
</feature>
<feature type="compositionally biased region" description="Gly residues" evidence="2">
    <location>
        <begin position="448"/>
        <end position="458"/>
    </location>
</feature>
<feature type="compositionally biased region" description="Gly residues" evidence="2">
    <location>
        <begin position="466"/>
        <end position="476"/>
    </location>
</feature>
<feature type="compositionally biased region" description="Gly residues" evidence="2">
    <location>
        <begin position="485"/>
        <end position="494"/>
    </location>
</feature>
<feature type="compositionally biased region" description="Gly residues" evidence="2">
    <location>
        <begin position="503"/>
        <end position="512"/>
    </location>
</feature>
<feature type="compositionally biased region" description="Polar residues" evidence="2">
    <location>
        <begin position="515"/>
        <end position="535"/>
    </location>
</feature>
<feature type="compositionally biased region" description="Gly residues" evidence="2">
    <location>
        <begin position="539"/>
        <end position="548"/>
    </location>
</feature>
<feature type="compositionally biased region" description="Gly residues" evidence="2">
    <location>
        <begin position="575"/>
        <end position="584"/>
    </location>
</feature>
<feature type="compositionally biased region" description="Gly residues" evidence="2">
    <location>
        <begin position="593"/>
        <end position="602"/>
    </location>
</feature>
<feature type="compositionally biased region" description="Gly residues" evidence="2">
    <location>
        <begin position="611"/>
        <end position="620"/>
    </location>
</feature>
<feature type="compositionally biased region" description="Gly residues" evidence="2">
    <location>
        <begin position="629"/>
        <end position="638"/>
    </location>
</feature>
<feature type="compositionally biased region" description="Gly residues" evidence="2">
    <location>
        <begin position="647"/>
        <end position="656"/>
    </location>
</feature>
<feature type="compositionally biased region" description="Polar residues" evidence="2">
    <location>
        <begin position="659"/>
        <end position="679"/>
    </location>
</feature>
<feature type="compositionally biased region" description="Gly residues" evidence="2">
    <location>
        <begin position="682"/>
        <end position="692"/>
    </location>
</feature>
<feature type="compositionally biased region" description="Gly residues" evidence="2">
    <location>
        <begin position="718"/>
        <end position="728"/>
    </location>
</feature>
<feature type="compositionally biased region" description="Gly residues" evidence="2">
    <location>
        <begin position="737"/>
        <end position="746"/>
    </location>
</feature>
<feature type="compositionally biased region" description="Gly residues" evidence="2">
    <location>
        <begin position="755"/>
        <end position="764"/>
    </location>
</feature>
<feature type="compositionally biased region" description="Gly residues" evidence="2">
    <location>
        <begin position="773"/>
        <end position="788"/>
    </location>
</feature>
<feature type="compositionally biased region" description="Low complexity" evidence="2">
    <location>
        <begin position="789"/>
        <end position="804"/>
    </location>
</feature>
<feature type="compositionally biased region" description="Gly residues" evidence="2">
    <location>
        <begin position="844"/>
        <end position="857"/>
    </location>
</feature>
<feature type="compositionally biased region" description="Low complexity" evidence="2">
    <location>
        <begin position="887"/>
        <end position="919"/>
    </location>
</feature>
<feature type="compositionally biased region" description="Polar residues" evidence="2">
    <location>
        <begin position="920"/>
        <end position="936"/>
    </location>
</feature>
<feature type="compositionally biased region" description="Basic residues" evidence="2">
    <location>
        <begin position="951"/>
        <end position="966"/>
    </location>
</feature>
<feature type="site" description="Cleavage; by thrombin; to release fibrinopeptide A" evidence="1">
    <location>
        <begin position="11"/>
        <end position="12"/>
    </location>
</feature>
<feature type="disulfide bond" description="Interchain (with alpha chain)">
    <location>
        <position position="26"/>
    </location>
</feature>
<feature type="disulfide bond" description="Interchain (with beta chain)">
    <location>
        <position position="34"/>
    </location>
</feature>
<feature type="disulfide bond" description="Interchain (with gamma chain)">
    <location>
        <position position="43"/>
    </location>
</feature>
<feature type="disulfide bond" description="Interchain (with beta chain)">
    <location>
        <position position="47"/>
    </location>
</feature>
<feature type="disulfide bond" description="Interchain (with gamma chain)" evidence="3">
    <location>
        <position position="159"/>
    </location>
</feature>
<feature type="disulfide bond" description="Interchain (with beta chain)" evidence="3">
    <location>
        <position position="163"/>
    </location>
</feature>
<feature type="non-terminal residue">
    <location>
        <position position="1"/>
    </location>
</feature>
<feature type="turn" evidence="6">
    <location>
        <begin position="101"/>
        <end position="103"/>
    </location>
</feature>
<feature type="helix" evidence="6">
    <location>
        <begin position="104"/>
        <end position="110"/>
    </location>
</feature>
<feature type="turn" evidence="6">
    <location>
        <begin position="111"/>
        <end position="113"/>
    </location>
</feature>
<feature type="helix" evidence="6">
    <location>
        <begin position="114"/>
        <end position="158"/>
    </location>
</feature>
<feature type="helix" evidence="6">
    <location>
        <begin position="159"/>
        <end position="161"/>
    </location>
</feature>
<feature type="strand" evidence="6">
    <location>
        <begin position="163"/>
        <end position="165"/>
    </location>
</feature>
<feature type="helix" evidence="6">
    <location>
        <begin position="175"/>
        <end position="185"/>
    </location>
</feature>
<feature type="helix" evidence="6">
    <location>
        <begin position="188"/>
        <end position="190"/>
    </location>
</feature>
<name>FIBA1_PETMA</name>
<evidence type="ECO:0000250" key="1"/>
<evidence type="ECO:0000256" key="2">
    <source>
        <dbReference type="SAM" id="MobiDB-lite"/>
    </source>
</evidence>
<evidence type="ECO:0000269" key="3">
    <source>
    </source>
</evidence>
<evidence type="ECO:0000269" key="4">
    <source>
    </source>
</evidence>
<evidence type="ECO:0000269" key="5">
    <source>
    </source>
</evidence>
<evidence type="ECO:0007829" key="6">
    <source>
        <dbReference type="PDB" id="1LWU"/>
    </source>
</evidence>
<keyword id="KW-0002">3D-structure</keyword>
<keyword id="KW-0094">Blood coagulation</keyword>
<keyword id="KW-0175">Coiled coil</keyword>
<keyword id="KW-0903">Direct protein sequencing</keyword>
<keyword id="KW-1015">Disulfide bond</keyword>
<keyword id="KW-0356">Hemostasis</keyword>
<keyword id="KW-0677">Repeat</keyword>
<keyword id="KW-0964">Secreted</keyword>
<keyword id="KW-0732">Signal</keyword>
<accession>P02674</accession>
<protein>
    <recommendedName>
        <fullName>Fibrinogen alpha-1 chain</fullName>
    </recommendedName>
    <component>
        <recommendedName>
            <fullName>Fibrinopeptide A</fullName>
        </recommendedName>
    </component>
    <component>
        <recommendedName>
            <fullName>Fibrinogen alpha-1 chain</fullName>
        </recommendedName>
    </component>
</protein>